<proteinExistence type="inferred from homology"/>
<keyword id="KW-0012">Acyltransferase</keyword>
<keyword id="KW-0448">Lipopolysaccharide biosynthesis</keyword>
<keyword id="KW-1185">Reference proteome</keyword>
<keyword id="KW-0677">Repeat</keyword>
<keyword id="KW-0808">Transferase</keyword>
<reference key="1">
    <citation type="journal article" date="2002" name="Nucleic Acids Res.">
        <title>Genome sequence of Shigella flexneri 2a: insights into pathogenicity through comparison with genomes of Escherichia coli K12 and O157.</title>
        <authorList>
            <person name="Jin Q."/>
            <person name="Yuan Z."/>
            <person name="Xu J."/>
            <person name="Wang Y."/>
            <person name="Shen Y."/>
            <person name="Lu W."/>
            <person name="Wang J."/>
            <person name="Liu H."/>
            <person name="Yang J."/>
            <person name="Yang F."/>
            <person name="Zhang X."/>
            <person name="Zhang J."/>
            <person name="Yang G."/>
            <person name="Wu H."/>
            <person name="Qu D."/>
            <person name="Dong J."/>
            <person name="Sun L."/>
            <person name="Xue Y."/>
            <person name="Zhao A."/>
            <person name="Gao Y."/>
            <person name="Zhu J."/>
            <person name="Kan B."/>
            <person name="Ding K."/>
            <person name="Chen S."/>
            <person name="Cheng H."/>
            <person name="Yao Z."/>
            <person name="He B."/>
            <person name="Chen R."/>
            <person name="Ma D."/>
            <person name="Qiang B."/>
            <person name="Wen Y."/>
            <person name="Hou Y."/>
            <person name="Yu J."/>
        </authorList>
    </citation>
    <scope>NUCLEOTIDE SEQUENCE [LARGE SCALE GENOMIC DNA]</scope>
    <source>
        <strain>301 / Serotype 2a</strain>
    </source>
</reference>
<reference key="2">
    <citation type="journal article" date="2003" name="Infect. Immun.">
        <title>Complete genome sequence and comparative genomics of Shigella flexneri serotype 2a strain 2457T.</title>
        <authorList>
            <person name="Wei J."/>
            <person name="Goldberg M.B."/>
            <person name="Burland V."/>
            <person name="Venkatesan M.M."/>
            <person name="Deng W."/>
            <person name="Fournier G."/>
            <person name="Mayhew G.F."/>
            <person name="Plunkett G. III"/>
            <person name="Rose D.J."/>
            <person name="Darling A."/>
            <person name="Mau B."/>
            <person name="Perna N.T."/>
            <person name="Payne S.M."/>
            <person name="Runyen-Janecky L.J."/>
            <person name="Zhou S."/>
            <person name="Schwartz D.C."/>
            <person name="Blattner F.R."/>
        </authorList>
    </citation>
    <scope>NUCLEOTIDE SEQUENCE [LARGE SCALE GENOMIC DNA]</scope>
    <source>
        <strain>ATCC 700930 / 2457T / Serotype 2a</strain>
    </source>
</reference>
<dbReference type="EC" id="2.3.1.-"/>
<dbReference type="EMBL" id="AE005674">
    <property type="protein sequence ID" value="AAN43656.1"/>
    <property type="molecule type" value="Genomic_DNA"/>
</dbReference>
<dbReference type="EMBL" id="AE014073">
    <property type="protein sequence ID" value="AAP17485.1"/>
    <property type="molecule type" value="Genomic_DNA"/>
</dbReference>
<dbReference type="RefSeq" id="NP_707949.1">
    <property type="nucleotide sequence ID" value="NC_004337.2"/>
</dbReference>
<dbReference type="RefSeq" id="WP_001153547.1">
    <property type="nucleotide sequence ID" value="NZ_WPGW01000076.1"/>
</dbReference>
<dbReference type="SMR" id="P0ACD3"/>
<dbReference type="STRING" id="198214.SF2117"/>
<dbReference type="PaxDb" id="198214-SF2117"/>
<dbReference type="GeneID" id="1026791"/>
<dbReference type="GeneID" id="93775137"/>
<dbReference type="KEGG" id="sfl:SF2117"/>
<dbReference type="KEGG" id="sfx:S2240"/>
<dbReference type="PATRIC" id="fig|198214.7.peg.2525"/>
<dbReference type="HOGENOM" id="CLU_051638_7_2_6"/>
<dbReference type="UniPathway" id="UPA00936"/>
<dbReference type="Proteomes" id="UP000001006">
    <property type="component" value="Chromosome"/>
</dbReference>
<dbReference type="Proteomes" id="UP000002673">
    <property type="component" value="Chromosome"/>
</dbReference>
<dbReference type="GO" id="GO:0005829">
    <property type="term" value="C:cytosol"/>
    <property type="evidence" value="ECO:0007669"/>
    <property type="project" value="TreeGrafter"/>
</dbReference>
<dbReference type="GO" id="GO:0008374">
    <property type="term" value="F:O-acyltransferase activity"/>
    <property type="evidence" value="ECO:0007669"/>
    <property type="project" value="TreeGrafter"/>
</dbReference>
<dbReference type="GO" id="GO:0009103">
    <property type="term" value="P:lipopolysaccharide biosynthetic process"/>
    <property type="evidence" value="ECO:0007669"/>
    <property type="project" value="UniProtKB-KW"/>
</dbReference>
<dbReference type="GO" id="GO:0045228">
    <property type="term" value="P:slime layer polysaccharide biosynthetic process"/>
    <property type="evidence" value="ECO:0007669"/>
    <property type="project" value="UniProtKB-UniPathway"/>
</dbReference>
<dbReference type="CDD" id="cd05825">
    <property type="entry name" value="LbH_wcaF_like"/>
    <property type="match status" value="1"/>
</dbReference>
<dbReference type="Gene3D" id="2.160.10.10">
    <property type="entry name" value="Hexapeptide repeat proteins"/>
    <property type="match status" value="1"/>
</dbReference>
<dbReference type="InterPro" id="IPR024005">
    <property type="entry name" value="Colanic_acid_synth_WcaF"/>
</dbReference>
<dbReference type="InterPro" id="IPR001451">
    <property type="entry name" value="Hexapep"/>
</dbReference>
<dbReference type="InterPro" id="IPR018357">
    <property type="entry name" value="Hexapep_transf_CS"/>
</dbReference>
<dbReference type="InterPro" id="IPR051159">
    <property type="entry name" value="Hexapeptide_acetyltransf"/>
</dbReference>
<dbReference type="InterPro" id="IPR011004">
    <property type="entry name" value="Trimer_LpxA-like_sf"/>
</dbReference>
<dbReference type="NCBIfam" id="NF007797">
    <property type="entry name" value="PRK10502.1"/>
    <property type="match status" value="1"/>
</dbReference>
<dbReference type="NCBIfam" id="TIGR04008">
    <property type="entry name" value="WcaF"/>
    <property type="match status" value="1"/>
</dbReference>
<dbReference type="PANTHER" id="PTHR23416:SF23">
    <property type="entry name" value="ACETYLTRANSFERASE C18B11.09C-RELATED"/>
    <property type="match status" value="1"/>
</dbReference>
<dbReference type="PANTHER" id="PTHR23416">
    <property type="entry name" value="SIALIC ACID SYNTHASE-RELATED"/>
    <property type="match status" value="1"/>
</dbReference>
<dbReference type="Pfam" id="PF00132">
    <property type="entry name" value="Hexapep"/>
    <property type="match status" value="1"/>
</dbReference>
<dbReference type="SUPFAM" id="SSF51161">
    <property type="entry name" value="Trimeric LpxA-like enzymes"/>
    <property type="match status" value="1"/>
</dbReference>
<dbReference type="PROSITE" id="PS00101">
    <property type="entry name" value="HEXAPEP_TRANSFERASES"/>
    <property type="match status" value="1"/>
</dbReference>
<feature type="chain" id="PRO_0000068737" description="Putative colanic acid biosynthesis acetyltransferase WcaF">
    <location>
        <begin position="1"/>
        <end position="182"/>
    </location>
</feature>
<comment type="pathway">
    <text>Slime biogenesis; slime polysaccharide biosynthesis.</text>
</comment>
<comment type="similarity">
    <text evidence="1">Belongs to the transferase hexapeptide repeat family.</text>
</comment>
<protein>
    <recommendedName>
        <fullName>Putative colanic acid biosynthesis acetyltransferase WcaF</fullName>
        <ecNumber>2.3.1.-</ecNumber>
    </recommendedName>
</protein>
<evidence type="ECO:0000305" key="1"/>
<name>WCAF_SHIFL</name>
<accession>P0ACD3</accession>
<accession>P71240</accession>
<accession>P76383</accession>
<organism>
    <name type="scientific">Shigella flexneri</name>
    <dbReference type="NCBI Taxonomy" id="623"/>
    <lineage>
        <taxon>Bacteria</taxon>
        <taxon>Pseudomonadati</taxon>
        <taxon>Pseudomonadota</taxon>
        <taxon>Gammaproteobacteria</taxon>
        <taxon>Enterobacterales</taxon>
        <taxon>Enterobacteriaceae</taxon>
        <taxon>Shigella</taxon>
    </lineage>
</organism>
<sequence>MQDLSGFSVPKGFRGGNAIKVQLWWAVQATIFAWSPQVLYRWRAFLLRLFGAKIGKNVVIRPSVKITYPWKLTLGDYAWVGDDVNLYTLGEITIGAHSVISQKSYLCTGSHDHASQHFTINATPIVIGEKCWLATDVFVAPGVTIGDGTVVGARSSVFKSLPANVVCRGNPAVVIRERVETE</sequence>
<gene>
    <name type="primary">wcaF</name>
    <name type="ordered locus">SF2117</name>
    <name type="ordered locus">S2240</name>
</gene>